<reference key="1">
    <citation type="submission" date="1999-04" db="EMBL/GenBank/DDBJ databases">
        <title>Structural analysis of Arabidopsis thaliana chromosome 5. XI.</title>
        <authorList>
            <person name="Kaneko T."/>
            <person name="Katoh T."/>
            <person name="Asamizu E."/>
            <person name="Sato S."/>
            <person name="Nakamura Y."/>
            <person name="Kotani H."/>
            <person name="Tabata S."/>
        </authorList>
    </citation>
    <scope>NUCLEOTIDE SEQUENCE [LARGE SCALE GENOMIC DNA]</scope>
    <source>
        <strain>cv. Columbia</strain>
    </source>
</reference>
<reference key="2">
    <citation type="journal article" date="2017" name="Plant J.">
        <title>Araport11: a complete reannotation of the Arabidopsis thaliana reference genome.</title>
        <authorList>
            <person name="Cheng C.Y."/>
            <person name="Krishnakumar V."/>
            <person name="Chan A.P."/>
            <person name="Thibaud-Nissen F."/>
            <person name="Schobel S."/>
            <person name="Town C.D."/>
        </authorList>
    </citation>
    <scope>GENOME REANNOTATION</scope>
    <source>
        <strain>cv. Columbia</strain>
    </source>
</reference>
<reference key="3">
    <citation type="submission" date="2004-09" db="EMBL/GenBank/DDBJ databases">
        <title>Large-scale analysis of RIKEN Arabidopsis full-length (RAFL) cDNAs.</title>
        <authorList>
            <person name="Totoki Y."/>
            <person name="Seki M."/>
            <person name="Ishida J."/>
            <person name="Nakajima M."/>
            <person name="Enju A."/>
            <person name="Kamiya A."/>
            <person name="Narusaka M."/>
            <person name="Shin-i T."/>
            <person name="Nakagawa M."/>
            <person name="Sakamoto N."/>
            <person name="Oishi K."/>
            <person name="Kohara Y."/>
            <person name="Kobayashi M."/>
            <person name="Toyoda A."/>
            <person name="Sakaki Y."/>
            <person name="Sakurai T."/>
            <person name="Iida K."/>
            <person name="Akiyama K."/>
            <person name="Satou M."/>
            <person name="Toyoda T."/>
            <person name="Konagaya A."/>
            <person name="Carninci P."/>
            <person name="Kawai J."/>
            <person name="Hayashizaki Y."/>
            <person name="Shinozaki K."/>
        </authorList>
    </citation>
    <scope>NUCLEOTIDE SEQUENCE [LARGE SCALE MRNA]</scope>
    <source>
        <strain>cv. Columbia</strain>
    </source>
</reference>
<reference key="4">
    <citation type="submission" date="2006-09" db="EMBL/GenBank/DDBJ databases">
        <title>Arabidopsis ORF clones.</title>
        <authorList>
            <person name="Quinitio C."/>
            <person name="Chen H."/>
            <person name="Kim C.J."/>
            <person name="Shinn P."/>
            <person name="Ecker J.R."/>
        </authorList>
    </citation>
    <scope>NUCLEOTIDE SEQUENCE [LARGE SCALE MRNA]</scope>
    <source>
        <strain>cv. Columbia</strain>
    </source>
</reference>
<reference key="5">
    <citation type="submission" date="2002-03" db="EMBL/GenBank/DDBJ databases">
        <title>Full-length cDNA from Arabidopsis thaliana.</title>
        <authorList>
            <person name="Brover V.V."/>
            <person name="Troukhan M.E."/>
            <person name="Alexandrov N.A."/>
            <person name="Lu Y.-P."/>
            <person name="Flavell R.B."/>
            <person name="Feldmann K.A."/>
        </authorList>
    </citation>
    <scope>NUCLEOTIDE SEQUENCE [LARGE SCALE MRNA]</scope>
</reference>
<reference key="6">
    <citation type="journal article" date="2008" name="Mol. Plant">
        <title>The dynamic pollen tube cytoskeleton: live cell studies using actin-binding and microtubule-binding reporter proteins.</title>
        <authorList>
            <person name="Cheung A.Y."/>
            <person name="Duan Q.H."/>
            <person name="Costa S.S."/>
            <person name="de Graaf B.H."/>
            <person name="Di Stilio V.S."/>
            <person name="Feijo J."/>
            <person name="Wu H.M."/>
        </authorList>
    </citation>
    <scope>FUNCTION</scope>
    <scope>SUBCELLULAR LOCATION</scope>
</reference>
<reference key="7">
    <citation type="journal article" date="2008" name="Plant Cell">
        <title>The microtubule plus-end binding protein EB1 functions in root responses to touch and gravity signals in Arabidopsis.</title>
        <authorList>
            <person name="Bisgrove S.R."/>
            <person name="Lee Y.R."/>
            <person name="Liu B."/>
            <person name="Peters N.T."/>
            <person name="Kropf D.L."/>
        </authorList>
    </citation>
    <scope>SUBCELLULAR LOCATION</scope>
    <scope>DISRUPTION PHENOTYPE</scope>
    <source>
        <strain>cv. Wassilewskija</strain>
    </source>
</reference>
<reference key="8">
    <citation type="journal article" date="2010" name="J. Cell Sci.">
        <title>Nuclear-localized subtype of end-binding 1 protein regulates spindle organization in Arabidopsis.</title>
        <authorList>
            <person name="Komaki S."/>
            <person name="Abe T."/>
            <person name="Coutuer S."/>
            <person name="Inze D."/>
            <person name="Russinova E."/>
            <person name="Hashimoto T."/>
        </authorList>
    </citation>
    <scope>FUNCTION</scope>
    <scope>SUBUNIT</scope>
    <scope>SUBCELLULAR LOCATION</scope>
    <scope>TISSUE SPECIFICITY</scope>
    <scope>MUTAGENESIS OF 289-LYS--LYS-291 AND 309-ARG--ARG-311</scope>
    <scope>DISRUPTION PHENOTYPE</scope>
</reference>
<reference key="9">
    <citation type="journal article" date="2011" name="Plant Cell">
        <title>Interaction of antiparallel microtubules in the phragmoplast is mediated by the microtubule-associated protein MAP65-3 in Arabidopsis.</title>
        <authorList>
            <person name="Ho C.M."/>
            <person name="Hotta T."/>
            <person name="Guo F."/>
            <person name="Roberson R.W."/>
            <person name="Lee Y.R."/>
            <person name="Liu B."/>
        </authorList>
    </citation>
    <scope>SUBCELLULAR LOCATION</scope>
</reference>
<dbReference type="EMBL" id="AB025614">
    <property type="protein sequence ID" value="BAB09646.1"/>
    <property type="molecule type" value="Genomic_DNA"/>
</dbReference>
<dbReference type="EMBL" id="CP002688">
    <property type="protein sequence ID" value="AED98323.1"/>
    <property type="molecule type" value="Genomic_DNA"/>
</dbReference>
<dbReference type="EMBL" id="AK175495">
    <property type="protein sequence ID" value="BAD43258.1"/>
    <property type="molecule type" value="mRNA"/>
</dbReference>
<dbReference type="EMBL" id="BT028930">
    <property type="protein sequence ID" value="ABI49477.1"/>
    <property type="molecule type" value="mRNA"/>
</dbReference>
<dbReference type="EMBL" id="AY087775">
    <property type="protein sequence ID" value="AAM65311.1"/>
    <property type="molecule type" value="mRNA"/>
</dbReference>
<dbReference type="RefSeq" id="NP_201528.1">
    <property type="nucleotide sequence ID" value="NM_126127.4"/>
</dbReference>
<dbReference type="SMR" id="Q9FGQ6"/>
<dbReference type="BioGRID" id="22104">
    <property type="interactions" value="3"/>
</dbReference>
<dbReference type="FunCoup" id="Q9FGQ6">
    <property type="interactions" value="2533"/>
</dbReference>
<dbReference type="STRING" id="3702.Q9FGQ6"/>
<dbReference type="iPTMnet" id="Q9FGQ6"/>
<dbReference type="PaxDb" id="3702-AT5G67270.1"/>
<dbReference type="ProteomicsDB" id="224713"/>
<dbReference type="EnsemblPlants" id="AT5G67270.1">
    <property type="protein sequence ID" value="AT5G67270.1"/>
    <property type="gene ID" value="AT5G67270"/>
</dbReference>
<dbReference type="GeneID" id="836862"/>
<dbReference type="Gramene" id="AT5G67270.1">
    <property type="protein sequence ID" value="AT5G67270.1"/>
    <property type="gene ID" value="AT5G67270"/>
</dbReference>
<dbReference type="KEGG" id="ath:AT5G67270"/>
<dbReference type="Araport" id="AT5G67270"/>
<dbReference type="TAIR" id="AT5G67270">
    <property type="gene designation" value="EB1C"/>
</dbReference>
<dbReference type="eggNOG" id="KOG3000">
    <property type="taxonomic scope" value="Eukaryota"/>
</dbReference>
<dbReference type="HOGENOM" id="CLU_041744_0_1_1"/>
<dbReference type="InParanoid" id="Q9FGQ6"/>
<dbReference type="OMA" id="WIKRFWD"/>
<dbReference type="OrthoDB" id="2119228at2759"/>
<dbReference type="PhylomeDB" id="Q9FGQ6"/>
<dbReference type="CD-CODE" id="33FCD62D">
    <property type="entry name" value="Centrosome"/>
</dbReference>
<dbReference type="PRO" id="PR:Q9FGQ6"/>
<dbReference type="Proteomes" id="UP000006548">
    <property type="component" value="Chromosome 5"/>
</dbReference>
<dbReference type="ExpressionAtlas" id="Q9FGQ6">
    <property type="expression patterns" value="baseline and differential"/>
</dbReference>
<dbReference type="GO" id="GO:0005874">
    <property type="term" value="C:microtubule"/>
    <property type="evidence" value="ECO:0007669"/>
    <property type="project" value="UniProtKB-KW"/>
</dbReference>
<dbReference type="GO" id="GO:0005730">
    <property type="term" value="C:nucleolus"/>
    <property type="evidence" value="ECO:0007005"/>
    <property type="project" value="TAIR"/>
</dbReference>
<dbReference type="GO" id="GO:0005634">
    <property type="term" value="C:nucleus"/>
    <property type="evidence" value="ECO:0007005"/>
    <property type="project" value="TAIR"/>
</dbReference>
<dbReference type="GO" id="GO:0009524">
    <property type="term" value="C:phragmoplast"/>
    <property type="evidence" value="ECO:0007005"/>
    <property type="project" value="TAIR"/>
</dbReference>
<dbReference type="GO" id="GO:0005819">
    <property type="term" value="C:spindle"/>
    <property type="evidence" value="ECO:0007005"/>
    <property type="project" value="TAIR"/>
</dbReference>
<dbReference type="GO" id="GO:0008017">
    <property type="term" value="F:microtubule binding"/>
    <property type="evidence" value="ECO:0000250"/>
    <property type="project" value="TAIR"/>
</dbReference>
<dbReference type="GO" id="GO:0051301">
    <property type="term" value="P:cell division"/>
    <property type="evidence" value="ECO:0007669"/>
    <property type="project" value="UniProtKB-KW"/>
</dbReference>
<dbReference type="GO" id="GO:0030865">
    <property type="term" value="P:cortical cytoskeleton organization"/>
    <property type="evidence" value="ECO:0000250"/>
    <property type="project" value="TAIR"/>
</dbReference>
<dbReference type="GO" id="GO:0009652">
    <property type="term" value="P:thigmotropism"/>
    <property type="evidence" value="ECO:0000315"/>
    <property type="project" value="TAIR"/>
</dbReference>
<dbReference type="CDD" id="cd00014">
    <property type="entry name" value="CH_SF"/>
    <property type="match status" value="1"/>
</dbReference>
<dbReference type="FunFam" id="1.20.5.1430:FF:000006">
    <property type="entry name" value="Microtubule-associated protein RP/EB family member 1C"/>
    <property type="match status" value="1"/>
</dbReference>
<dbReference type="FunFam" id="1.10.418.10:FF:000028">
    <property type="entry name" value="RP/EB family microtubule-associated protein"/>
    <property type="match status" value="1"/>
</dbReference>
<dbReference type="Gene3D" id="1.20.5.1430">
    <property type="match status" value="1"/>
</dbReference>
<dbReference type="Gene3D" id="1.10.418.10">
    <property type="entry name" value="Calponin-like domain"/>
    <property type="match status" value="1"/>
</dbReference>
<dbReference type="InterPro" id="IPR001715">
    <property type="entry name" value="CH_dom"/>
</dbReference>
<dbReference type="InterPro" id="IPR036872">
    <property type="entry name" value="CH_dom_sf"/>
</dbReference>
<dbReference type="InterPro" id="IPR004953">
    <property type="entry name" value="EB1_C"/>
</dbReference>
<dbReference type="InterPro" id="IPR036133">
    <property type="entry name" value="EB1_C_sf"/>
</dbReference>
<dbReference type="InterPro" id="IPR027328">
    <property type="entry name" value="MAPRE"/>
</dbReference>
<dbReference type="PANTHER" id="PTHR10623">
    <property type="entry name" value="MICROTUBULE-ASSOCIATED PROTEIN RP/EB FAMILY MEMBER"/>
    <property type="match status" value="1"/>
</dbReference>
<dbReference type="Pfam" id="PF00307">
    <property type="entry name" value="CH"/>
    <property type="match status" value="1"/>
</dbReference>
<dbReference type="Pfam" id="PF03271">
    <property type="entry name" value="EB1"/>
    <property type="match status" value="1"/>
</dbReference>
<dbReference type="SUPFAM" id="SSF47576">
    <property type="entry name" value="Calponin-homology domain, CH-domain"/>
    <property type="match status" value="1"/>
</dbReference>
<dbReference type="SUPFAM" id="SSF140612">
    <property type="entry name" value="EB1 dimerisation domain-like"/>
    <property type="match status" value="1"/>
</dbReference>
<dbReference type="PROSITE" id="PS50021">
    <property type="entry name" value="CH"/>
    <property type="match status" value="1"/>
</dbReference>
<dbReference type="PROSITE" id="PS51230">
    <property type="entry name" value="EB1_C"/>
    <property type="match status" value="1"/>
</dbReference>
<proteinExistence type="evidence at protein level"/>
<feature type="chain" id="PRO_0000418412" description="Microtubule-associated protein RP/EB family member 1C">
    <location>
        <begin position="1"/>
        <end position="329"/>
    </location>
</feature>
<feature type="domain" description="Calponin-homology (CH)" evidence="1">
    <location>
        <begin position="13"/>
        <end position="115"/>
    </location>
</feature>
<feature type="domain" description="EB1 C-terminal" evidence="2">
    <location>
        <begin position="193"/>
        <end position="263"/>
    </location>
</feature>
<feature type="region of interest" description="Disordered" evidence="3">
    <location>
        <begin position="130"/>
        <end position="203"/>
    </location>
</feature>
<feature type="region of interest" description="Required for nuclear localization">
    <location>
        <begin position="289"/>
        <end position="311"/>
    </location>
</feature>
<feature type="compositionally biased region" description="Basic and acidic residues" evidence="3">
    <location>
        <begin position="130"/>
        <end position="141"/>
    </location>
</feature>
<feature type="compositionally biased region" description="Low complexity" evidence="3">
    <location>
        <begin position="174"/>
        <end position="185"/>
    </location>
</feature>
<feature type="mutagenesis site" description="Loss of targeting to nucleus." evidence="6">
    <original>KRK</original>
    <variation>AAA</variation>
    <location>
        <begin position="289"/>
        <end position="291"/>
    </location>
</feature>
<feature type="mutagenesis site" description="Loss of targeting to nucleus." evidence="6">
    <original>RQR</original>
    <variation>AQA</variation>
    <location>
        <begin position="309"/>
        <end position="311"/>
    </location>
</feature>
<sequence>MATNIGMMDSAYFVGRSEILAWINSTLQLNLSKVEEACSGAVHCQLMDSVHPGTVPMHKVNFDAKSEYEMIQNYKVLQDVFNKLKITKHIEVSKLVKGRPLDNLEFMQWMKKYCDSVNGGQHNYHALERREASKGGKEATKRAAATQQSGKSSSSSAPPRPSSSNGTRKHEPQSNNTGTHHSSTGNHHHSSKPSAKQSKPVPAYDEKITELKLYIDSLEKERDFYFSKLRDVEILCQNPDTEHLPLVGSIKRILYAADGEDVGAAETQTLSPIAEGSEERRNSVTESQKRKLIVNLDVDVAAITTLSPRQRLSDASDVKCSGSSPLLTC</sequence>
<comment type="function">
    <text evidence="5 6">Plant-specific EB1 subtype that functions preferentially at early stages of plant mitosis by regulating spindle positioning and chromosome segregation. Accumulates in the prophase nucleus and is required to maintain spindle bipolarity during premetaphase and/or metaphase and for efficient segregation of chromosomes at anaphase. May play a role in the dynamics of microtubule network in elongating pollen tubes.</text>
</comment>
<comment type="subunit">
    <text evidence="6">Homodimer.</text>
</comment>
<comment type="subcellular location">
    <subcellularLocation>
        <location>Nucleus</location>
    </subcellularLocation>
    <subcellularLocation>
        <location>Cytoplasm</location>
        <location>Cytoskeleton</location>
        <location>Spindle</location>
    </subcellularLocation>
    <subcellularLocation>
        <location>Cytoplasm</location>
        <location>Cytoskeleton</location>
        <location>Phragmoplast</location>
    </subcellularLocation>
    <text>During mitosis, accumulates in the prophase nucleus, and after the nuclear envelope disintegration is associated with whole spindle microtubules, plus end of microtubules, phragmoplast and finally is actively recruited to the nucleus. Localizes in the microtubule network in elongating pollen tubes.</text>
</comment>
<comment type="tissue specificity">
    <text evidence="6">Highly expressed in the root and shoot meristems, in guard cells of leaf stomata, pollen grains and pollen tubes.</text>
</comment>
<comment type="domain">
    <text>Composed of two functionally independent domains. The N-terminal domain forms a hydrophobic cleft involved in microtubule binding and the C-terminal is involved in protein binding. In Arabidopsis thaliana, EB1A and EB1B possess an acidic C-terminal tail that has autoinhibitory function, but EB1C has a tail region with patches of basic amino acid residues required for nuclear targeting.</text>
</comment>
<comment type="disruption phenotype">
    <text evidence="4 6">No visible phenotype under normal growth conditions, but seedlings show increased sensitivity to oryzalin, a microtubule-destabilizing agent. conditions.</text>
</comment>
<comment type="miscellaneous">
    <text evidence="8">Plant microtubules behave differently from those of other eukaryotes in mitosis: they lack centrosomes and spindles are barrel-shaped with unfocused poles and no astral microtubules.</text>
</comment>
<comment type="similarity">
    <text evidence="7">Belongs to the MAPRE family.</text>
</comment>
<protein>
    <recommendedName>
        <fullName>Microtubule-associated protein RP/EB family member 1C</fullName>
    </recommendedName>
    <alternativeName>
        <fullName>APC-binding protein EB1C</fullName>
    </alternativeName>
    <alternativeName>
        <fullName>End-binding protein 1C</fullName>
        <shortName>AtEB1C</shortName>
    </alternativeName>
    <alternativeName>
        <fullName>Protein ATEB1 homolog 1</fullName>
        <shortName>AtEB1H1</shortName>
    </alternativeName>
</protein>
<keyword id="KW-0131">Cell cycle</keyword>
<keyword id="KW-0132">Cell division</keyword>
<keyword id="KW-0963">Cytoplasm</keyword>
<keyword id="KW-0206">Cytoskeleton</keyword>
<keyword id="KW-0493">Microtubule</keyword>
<keyword id="KW-0498">Mitosis</keyword>
<keyword id="KW-0539">Nucleus</keyword>
<keyword id="KW-1185">Reference proteome</keyword>
<accession>Q9FGQ6</accession>
<name>EB1C_ARATH</name>
<evidence type="ECO:0000255" key="1">
    <source>
        <dbReference type="PROSITE-ProRule" id="PRU00044"/>
    </source>
</evidence>
<evidence type="ECO:0000255" key="2">
    <source>
        <dbReference type="PROSITE-ProRule" id="PRU00576"/>
    </source>
</evidence>
<evidence type="ECO:0000256" key="3">
    <source>
        <dbReference type="SAM" id="MobiDB-lite"/>
    </source>
</evidence>
<evidence type="ECO:0000269" key="4">
    <source>
    </source>
</evidence>
<evidence type="ECO:0000269" key="5">
    <source>
    </source>
</evidence>
<evidence type="ECO:0000269" key="6">
    <source>
    </source>
</evidence>
<evidence type="ECO:0000305" key="7"/>
<evidence type="ECO:0000305" key="8">
    <source>
    </source>
</evidence>
<organism>
    <name type="scientific">Arabidopsis thaliana</name>
    <name type="common">Mouse-ear cress</name>
    <dbReference type="NCBI Taxonomy" id="3702"/>
    <lineage>
        <taxon>Eukaryota</taxon>
        <taxon>Viridiplantae</taxon>
        <taxon>Streptophyta</taxon>
        <taxon>Embryophyta</taxon>
        <taxon>Tracheophyta</taxon>
        <taxon>Spermatophyta</taxon>
        <taxon>Magnoliopsida</taxon>
        <taxon>eudicotyledons</taxon>
        <taxon>Gunneridae</taxon>
        <taxon>Pentapetalae</taxon>
        <taxon>rosids</taxon>
        <taxon>malvids</taxon>
        <taxon>Brassicales</taxon>
        <taxon>Brassicaceae</taxon>
        <taxon>Camelineae</taxon>
        <taxon>Arabidopsis</taxon>
    </lineage>
</organism>
<gene>
    <name type="primary">EB1C</name>
    <name type="ordered locus">At5g67270</name>
    <name type="ORF">K3G17.3</name>
</gene>